<proteinExistence type="inferred from homology"/>
<reference key="1">
    <citation type="journal article" date="2004" name="Nucleic Acids Res.">
        <title>Thermoadaptation trait revealed by the genome sequence of thermophilic Geobacillus kaustophilus.</title>
        <authorList>
            <person name="Takami H."/>
            <person name="Takaki Y."/>
            <person name="Chee G.-J."/>
            <person name="Nishi S."/>
            <person name="Shimamura S."/>
            <person name="Suzuki H."/>
            <person name="Matsui S."/>
            <person name="Uchiyama I."/>
        </authorList>
    </citation>
    <scope>NUCLEOTIDE SEQUENCE [LARGE SCALE GENOMIC DNA]</scope>
    <source>
        <strain>HTA426</strain>
    </source>
</reference>
<protein>
    <recommendedName>
        <fullName evidence="1">SsrA-binding protein</fullName>
    </recommendedName>
    <alternativeName>
        <fullName evidence="1">Small protein B</fullName>
    </alternativeName>
</protein>
<keyword id="KW-0963">Cytoplasm</keyword>
<keyword id="KW-1185">Reference proteome</keyword>
<keyword id="KW-0694">RNA-binding</keyword>
<organism>
    <name type="scientific">Geobacillus kaustophilus (strain HTA426)</name>
    <dbReference type="NCBI Taxonomy" id="235909"/>
    <lineage>
        <taxon>Bacteria</taxon>
        <taxon>Bacillati</taxon>
        <taxon>Bacillota</taxon>
        <taxon>Bacilli</taxon>
        <taxon>Bacillales</taxon>
        <taxon>Anoxybacillaceae</taxon>
        <taxon>Geobacillus</taxon>
        <taxon>Geobacillus thermoleovorans group</taxon>
    </lineage>
</organism>
<evidence type="ECO:0000255" key="1">
    <source>
        <dbReference type="HAMAP-Rule" id="MF_00023"/>
    </source>
</evidence>
<name>SSRP_GEOKA</name>
<gene>
    <name evidence="1" type="primary">smpB</name>
    <name type="ordered locus">GK3043</name>
</gene>
<sequence length="155" mass="18281">MPKGEGKVIAQNKKAHHDYFIEETYEAGLVLQGTEIKSIRNGRVNLKDSFAKVEKGEVFLHNMHISPYEQGNRYNHDPLRTRKLLLHRREINKLIGYTKEQGYTLVPLKLYIKNGFAKVELGVAKGKKKYDKREDMKRREAQREIERAFRERQKL</sequence>
<accession>Q5KVF8</accession>
<feature type="chain" id="PRO_0000102952" description="SsrA-binding protein">
    <location>
        <begin position="1"/>
        <end position="155"/>
    </location>
</feature>
<dbReference type="EMBL" id="BA000043">
    <property type="protein sequence ID" value="BAD77328.1"/>
    <property type="molecule type" value="Genomic_DNA"/>
</dbReference>
<dbReference type="RefSeq" id="WP_011232513.1">
    <property type="nucleotide sequence ID" value="NC_006510.1"/>
</dbReference>
<dbReference type="SMR" id="Q5KVF8"/>
<dbReference type="STRING" id="235909.GK3043"/>
<dbReference type="GeneID" id="32064920"/>
<dbReference type="KEGG" id="gka:GK3043"/>
<dbReference type="eggNOG" id="COG0691">
    <property type="taxonomic scope" value="Bacteria"/>
</dbReference>
<dbReference type="HOGENOM" id="CLU_108953_0_0_9"/>
<dbReference type="Proteomes" id="UP000001172">
    <property type="component" value="Chromosome"/>
</dbReference>
<dbReference type="GO" id="GO:0005829">
    <property type="term" value="C:cytosol"/>
    <property type="evidence" value="ECO:0007669"/>
    <property type="project" value="TreeGrafter"/>
</dbReference>
<dbReference type="GO" id="GO:0003723">
    <property type="term" value="F:RNA binding"/>
    <property type="evidence" value="ECO:0007669"/>
    <property type="project" value="UniProtKB-UniRule"/>
</dbReference>
<dbReference type="GO" id="GO:0070929">
    <property type="term" value="P:trans-translation"/>
    <property type="evidence" value="ECO:0007669"/>
    <property type="project" value="UniProtKB-UniRule"/>
</dbReference>
<dbReference type="CDD" id="cd09294">
    <property type="entry name" value="SmpB"/>
    <property type="match status" value="1"/>
</dbReference>
<dbReference type="Gene3D" id="2.40.280.10">
    <property type="match status" value="1"/>
</dbReference>
<dbReference type="HAMAP" id="MF_00023">
    <property type="entry name" value="SmpB"/>
    <property type="match status" value="1"/>
</dbReference>
<dbReference type="InterPro" id="IPR023620">
    <property type="entry name" value="SmpB"/>
</dbReference>
<dbReference type="InterPro" id="IPR000037">
    <property type="entry name" value="SsrA-bd_prot"/>
</dbReference>
<dbReference type="InterPro" id="IPR020081">
    <property type="entry name" value="SsrA-bd_prot_CS"/>
</dbReference>
<dbReference type="NCBIfam" id="NF003843">
    <property type="entry name" value="PRK05422.1"/>
    <property type="match status" value="1"/>
</dbReference>
<dbReference type="NCBIfam" id="TIGR00086">
    <property type="entry name" value="smpB"/>
    <property type="match status" value="1"/>
</dbReference>
<dbReference type="PANTHER" id="PTHR30308:SF2">
    <property type="entry name" value="SSRA-BINDING PROTEIN"/>
    <property type="match status" value="1"/>
</dbReference>
<dbReference type="PANTHER" id="PTHR30308">
    <property type="entry name" value="TMRNA-BINDING COMPONENT OF TRANS-TRANSLATION TAGGING COMPLEX"/>
    <property type="match status" value="1"/>
</dbReference>
<dbReference type="Pfam" id="PF01668">
    <property type="entry name" value="SmpB"/>
    <property type="match status" value="1"/>
</dbReference>
<dbReference type="SUPFAM" id="SSF74982">
    <property type="entry name" value="Small protein B (SmpB)"/>
    <property type="match status" value="1"/>
</dbReference>
<dbReference type="PROSITE" id="PS01317">
    <property type="entry name" value="SSRP"/>
    <property type="match status" value="1"/>
</dbReference>
<comment type="function">
    <text evidence="1">Required for rescue of stalled ribosomes mediated by trans-translation. Binds to transfer-messenger RNA (tmRNA), required for stable association of tmRNA with ribosomes. tmRNA and SmpB together mimic tRNA shape, replacing the anticodon stem-loop with SmpB. tmRNA is encoded by the ssrA gene; the 2 termini fold to resemble tRNA(Ala) and it encodes a 'tag peptide', a short internal open reading frame. During trans-translation Ala-aminoacylated tmRNA acts like a tRNA, entering the A-site of stalled ribosomes, displacing the stalled mRNA. The ribosome then switches to translate the ORF on the tmRNA; the nascent peptide is terminated with the 'tag peptide' encoded by the tmRNA and targeted for degradation. The ribosome is freed to recommence translation, which seems to be the essential function of trans-translation.</text>
</comment>
<comment type="subcellular location">
    <subcellularLocation>
        <location evidence="1">Cytoplasm</location>
    </subcellularLocation>
    <text evidence="1">The tmRNA-SmpB complex associates with stalled 70S ribosomes.</text>
</comment>
<comment type="similarity">
    <text evidence="1">Belongs to the SmpB family.</text>
</comment>